<name>GLGA1_SYNY3</name>
<organism>
    <name type="scientific">Synechocystis sp. (strain ATCC 27184 / PCC 6803 / Kazusa)</name>
    <dbReference type="NCBI Taxonomy" id="1111708"/>
    <lineage>
        <taxon>Bacteria</taxon>
        <taxon>Bacillati</taxon>
        <taxon>Cyanobacteriota</taxon>
        <taxon>Cyanophyceae</taxon>
        <taxon>Synechococcales</taxon>
        <taxon>Merismopediaceae</taxon>
        <taxon>Synechocystis</taxon>
    </lineage>
</organism>
<proteinExistence type="inferred from homology"/>
<comment type="function">
    <text evidence="1">Synthesizes alpha-1,4-glucan chains using ADP-glucose.</text>
</comment>
<comment type="catalytic activity">
    <reaction>
        <text>[(1-&gt;4)-alpha-D-glucosyl](n) + ADP-alpha-D-glucose = [(1-&gt;4)-alpha-D-glucosyl](n+1) + ADP + H(+)</text>
        <dbReference type="Rhea" id="RHEA:18189"/>
        <dbReference type="Rhea" id="RHEA-COMP:9584"/>
        <dbReference type="Rhea" id="RHEA-COMP:9587"/>
        <dbReference type="ChEBI" id="CHEBI:15378"/>
        <dbReference type="ChEBI" id="CHEBI:15444"/>
        <dbReference type="ChEBI" id="CHEBI:57498"/>
        <dbReference type="ChEBI" id="CHEBI:456216"/>
        <dbReference type="EC" id="2.4.1.21"/>
    </reaction>
</comment>
<comment type="pathway">
    <text>Glycan biosynthesis; glycogen biosynthesis.</text>
</comment>
<comment type="similarity">
    <text evidence="2">Belongs to the glycosyltransferase 1 family. Bacterial/plant glycogen synthase subfamily.</text>
</comment>
<gene>
    <name type="primary">glgA1</name>
    <name type="synonym">glgA</name>
    <name type="ordered locus">sll0945</name>
</gene>
<feature type="chain" id="PRO_0000188655" description="Glycogen synthase 1">
    <location>
        <begin position="1"/>
        <end position="477"/>
    </location>
</feature>
<feature type="binding site" evidence="1">
    <location>
        <position position="15"/>
    </location>
    <ligand>
        <name>ADP-alpha-D-glucose</name>
        <dbReference type="ChEBI" id="CHEBI:57498"/>
    </ligand>
</feature>
<accession>P74521</accession>
<protein>
    <recommendedName>
        <fullName>Glycogen synthase 1</fullName>
        <ecNumber>2.4.1.21</ecNumber>
    </recommendedName>
    <alternativeName>
        <fullName>Starch [bacterial glycogen] synthase 1</fullName>
    </alternativeName>
</protein>
<sequence>MKILFVAAEVSPLAKVGGMGDVVGSLPKVLHQLGHDVRVFMPYYGFIGDKIDVPKEPVWKGEAMFQQFAVYQSYLPDTKIPLYLFGHPAFDSRRIYGGDDEAWRFTFFSNGAAEFAWNHWKPEIIHCHDWHTGMIPVWMHQSPDIATVFTIHNLAYQGPWRGLLETMTWCPWYMQGDNVMAAAIQFANRVTTVSPTYAQQIQTPAYGEKLEGLLSYLSGNLVGILNGIDTEIYNPAEDRFISNVFDADSLDKRVKNKIAIQEETGLEINRNAMVVGIVARLVEQKGIDLVIQILDRFMSYTDSQLIILGTGDRHYETQLWQMASRFPGRMAVQLLHNDALSRRVYAGADVFLMPSRFEPCGLSQLMAMRYGCIPIVRRTGGLVDTVSFYDPINEAGTGYCFDRYEPLDCFTAMVRAWEGFRFKADWQKLQQRAMRADFSWYRSAGEYIKVYKGVVGKPEELSPMEEEKIAELTASYR</sequence>
<reference key="1">
    <citation type="journal article" date="1996" name="DNA Res.">
        <title>Sequence analysis of the genome of the unicellular cyanobacterium Synechocystis sp. strain PCC6803. II. Sequence determination of the entire genome and assignment of potential protein-coding regions.</title>
        <authorList>
            <person name="Kaneko T."/>
            <person name="Sato S."/>
            <person name="Kotani H."/>
            <person name="Tanaka A."/>
            <person name="Asamizu E."/>
            <person name="Nakamura Y."/>
            <person name="Miyajima N."/>
            <person name="Hirosawa M."/>
            <person name="Sugiura M."/>
            <person name="Sasamoto S."/>
            <person name="Kimura T."/>
            <person name="Hosouchi T."/>
            <person name="Matsuno A."/>
            <person name="Muraki A."/>
            <person name="Nakazaki N."/>
            <person name="Naruo K."/>
            <person name="Okumura S."/>
            <person name="Shimpo S."/>
            <person name="Takeuchi C."/>
            <person name="Wada T."/>
            <person name="Watanabe A."/>
            <person name="Yamada M."/>
            <person name="Yasuda M."/>
            <person name="Tabata S."/>
        </authorList>
    </citation>
    <scope>NUCLEOTIDE SEQUENCE [LARGE SCALE GENOMIC DNA]</scope>
    <source>
        <strain>ATCC 27184 / PCC 6803 / Kazusa</strain>
    </source>
</reference>
<keyword id="KW-0320">Glycogen biosynthesis</keyword>
<keyword id="KW-0328">Glycosyltransferase</keyword>
<keyword id="KW-1185">Reference proteome</keyword>
<keyword id="KW-0808">Transferase</keyword>
<evidence type="ECO:0000250" key="1"/>
<evidence type="ECO:0000305" key="2"/>
<dbReference type="EC" id="2.4.1.21"/>
<dbReference type="EMBL" id="BA000022">
    <property type="protein sequence ID" value="BAA18625.1"/>
    <property type="molecule type" value="Genomic_DNA"/>
</dbReference>
<dbReference type="PIR" id="S76496">
    <property type="entry name" value="S76496"/>
</dbReference>
<dbReference type="SMR" id="P74521"/>
<dbReference type="FunCoup" id="P74521">
    <property type="interactions" value="89"/>
</dbReference>
<dbReference type="STRING" id="1148.gene:10499509"/>
<dbReference type="CAZy" id="GT5">
    <property type="family name" value="Glycosyltransferase Family 5"/>
</dbReference>
<dbReference type="PaxDb" id="1148-1653713"/>
<dbReference type="EnsemblBacteria" id="BAA18625">
    <property type="protein sequence ID" value="BAA18625"/>
    <property type="gene ID" value="BAA18625"/>
</dbReference>
<dbReference type="KEGG" id="syn:sll0945"/>
<dbReference type="eggNOG" id="COG0297">
    <property type="taxonomic scope" value="Bacteria"/>
</dbReference>
<dbReference type="InParanoid" id="P74521"/>
<dbReference type="PhylomeDB" id="P74521"/>
<dbReference type="UniPathway" id="UPA00164"/>
<dbReference type="Proteomes" id="UP000001425">
    <property type="component" value="Chromosome"/>
</dbReference>
<dbReference type="GO" id="GO:0009011">
    <property type="term" value="F:alpha-1,4-glucan glucosyltransferase (ADP-glucose donor) activity"/>
    <property type="evidence" value="ECO:0007669"/>
    <property type="project" value="UniProtKB-UniRule"/>
</dbReference>
<dbReference type="GO" id="GO:0004373">
    <property type="term" value="F:alpha-1,4-glucan glucosyltransferase (UDP-glucose donor) activity"/>
    <property type="evidence" value="ECO:0007669"/>
    <property type="project" value="InterPro"/>
</dbReference>
<dbReference type="GO" id="GO:0005978">
    <property type="term" value="P:glycogen biosynthetic process"/>
    <property type="evidence" value="ECO:0007669"/>
    <property type="project" value="UniProtKB-UniRule"/>
</dbReference>
<dbReference type="CDD" id="cd03791">
    <property type="entry name" value="GT5_Glycogen_synthase_DULL1-like"/>
    <property type="match status" value="1"/>
</dbReference>
<dbReference type="Gene3D" id="3.40.50.2000">
    <property type="entry name" value="Glycogen Phosphorylase B"/>
    <property type="match status" value="2"/>
</dbReference>
<dbReference type="HAMAP" id="MF_00484">
    <property type="entry name" value="Glycogen_synth"/>
    <property type="match status" value="1"/>
</dbReference>
<dbReference type="InterPro" id="IPR001296">
    <property type="entry name" value="Glyco_trans_1"/>
</dbReference>
<dbReference type="InterPro" id="IPR011835">
    <property type="entry name" value="GS/SS"/>
</dbReference>
<dbReference type="InterPro" id="IPR013534">
    <property type="entry name" value="Starch_synth_cat_dom"/>
</dbReference>
<dbReference type="NCBIfam" id="TIGR02095">
    <property type="entry name" value="glgA"/>
    <property type="match status" value="1"/>
</dbReference>
<dbReference type="NCBIfam" id="NF001900">
    <property type="entry name" value="PRK00654.1-3"/>
    <property type="match status" value="1"/>
</dbReference>
<dbReference type="PANTHER" id="PTHR45825:SF11">
    <property type="entry name" value="ALPHA AMYLASE DOMAIN-CONTAINING PROTEIN"/>
    <property type="match status" value="1"/>
</dbReference>
<dbReference type="PANTHER" id="PTHR45825">
    <property type="entry name" value="GRANULE-BOUND STARCH SYNTHASE 1, CHLOROPLASTIC/AMYLOPLASTIC"/>
    <property type="match status" value="1"/>
</dbReference>
<dbReference type="Pfam" id="PF08323">
    <property type="entry name" value="Glyco_transf_5"/>
    <property type="match status" value="1"/>
</dbReference>
<dbReference type="Pfam" id="PF00534">
    <property type="entry name" value="Glycos_transf_1"/>
    <property type="match status" value="1"/>
</dbReference>
<dbReference type="SUPFAM" id="SSF53756">
    <property type="entry name" value="UDP-Glycosyltransferase/glycogen phosphorylase"/>
    <property type="match status" value="1"/>
</dbReference>